<organism>
    <name type="scientific">Arabidopsis thaliana</name>
    <name type="common">Mouse-ear cress</name>
    <dbReference type="NCBI Taxonomy" id="3702"/>
    <lineage>
        <taxon>Eukaryota</taxon>
        <taxon>Viridiplantae</taxon>
        <taxon>Streptophyta</taxon>
        <taxon>Embryophyta</taxon>
        <taxon>Tracheophyta</taxon>
        <taxon>Spermatophyta</taxon>
        <taxon>Magnoliopsida</taxon>
        <taxon>eudicotyledons</taxon>
        <taxon>Gunneridae</taxon>
        <taxon>Pentapetalae</taxon>
        <taxon>rosids</taxon>
        <taxon>malvids</taxon>
        <taxon>Brassicales</taxon>
        <taxon>Brassicaceae</taxon>
        <taxon>Camelineae</taxon>
        <taxon>Arabidopsis</taxon>
    </lineage>
</organism>
<evidence type="ECO:0000255" key="1">
    <source>
        <dbReference type="PROSITE-ProRule" id="PRU00080"/>
    </source>
</evidence>
<evidence type="ECO:0000305" key="2"/>
<feature type="chain" id="PRO_0000281931" description="F-box/LRR-repeat protein At1g48400">
    <location>
        <begin position="1"/>
        <end position="487"/>
    </location>
</feature>
<feature type="domain" description="F-box" evidence="1">
    <location>
        <begin position="9"/>
        <end position="57"/>
    </location>
</feature>
<feature type="repeat" description="LRR 1">
    <location>
        <begin position="71"/>
        <end position="97"/>
    </location>
</feature>
<feature type="repeat" description="LRR 2">
    <location>
        <begin position="125"/>
        <end position="153"/>
    </location>
</feature>
<feature type="repeat" description="LRR 3">
    <location>
        <begin position="174"/>
        <end position="199"/>
    </location>
</feature>
<feature type="repeat" description="LRR 4">
    <location>
        <begin position="225"/>
        <end position="251"/>
    </location>
</feature>
<feature type="repeat" description="LRR 5">
    <location>
        <begin position="327"/>
        <end position="358"/>
    </location>
</feature>
<feature type="repeat" description="LRR 6">
    <location>
        <begin position="359"/>
        <end position="384"/>
    </location>
</feature>
<feature type="sequence conflict" description="In Ref. 3; BAD94953." evidence="2" ref="3">
    <original>K</original>
    <variation>E</variation>
    <location>
        <position position="91"/>
    </location>
</feature>
<proteinExistence type="evidence at transcript level"/>
<reference key="1">
    <citation type="journal article" date="2000" name="Nature">
        <title>Sequence and analysis of chromosome 1 of the plant Arabidopsis thaliana.</title>
        <authorList>
            <person name="Theologis A."/>
            <person name="Ecker J.R."/>
            <person name="Palm C.J."/>
            <person name="Federspiel N.A."/>
            <person name="Kaul S."/>
            <person name="White O."/>
            <person name="Alonso J."/>
            <person name="Altafi H."/>
            <person name="Araujo R."/>
            <person name="Bowman C.L."/>
            <person name="Brooks S.Y."/>
            <person name="Buehler E."/>
            <person name="Chan A."/>
            <person name="Chao Q."/>
            <person name="Chen H."/>
            <person name="Cheuk R.F."/>
            <person name="Chin C.W."/>
            <person name="Chung M.K."/>
            <person name="Conn L."/>
            <person name="Conway A.B."/>
            <person name="Conway A.R."/>
            <person name="Creasy T.H."/>
            <person name="Dewar K."/>
            <person name="Dunn P."/>
            <person name="Etgu P."/>
            <person name="Feldblyum T.V."/>
            <person name="Feng J.-D."/>
            <person name="Fong B."/>
            <person name="Fujii C.Y."/>
            <person name="Gill J.E."/>
            <person name="Goldsmith A.D."/>
            <person name="Haas B."/>
            <person name="Hansen N.F."/>
            <person name="Hughes B."/>
            <person name="Huizar L."/>
            <person name="Hunter J.L."/>
            <person name="Jenkins J."/>
            <person name="Johnson-Hopson C."/>
            <person name="Khan S."/>
            <person name="Khaykin E."/>
            <person name="Kim C.J."/>
            <person name="Koo H.L."/>
            <person name="Kremenetskaia I."/>
            <person name="Kurtz D.B."/>
            <person name="Kwan A."/>
            <person name="Lam B."/>
            <person name="Langin-Hooper S."/>
            <person name="Lee A."/>
            <person name="Lee J.M."/>
            <person name="Lenz C.A."/>
            <person name="Li J.H."/>
            <person name="Li Y.-P."/>
            <person name="Lin X."/>
            <person name="Liu S.X."/>
            <person name="Liu Z.A."/>
            <person name="Luros J.S."/>
            <person name="Maiti R."/>
            <person name="Marziali A."/>
            <person name="Militscher J."/>
            <person name="Miranda M."/>
            <person name="Nguyen M."/>
            <person name="Nierman W.C."/>
            <person name="Osborne B.I."/>
            <person name="Pai G."/>
            <person name="Peterson J."/>
            <person name="Pham P.K."/>
            <person name="Rizzo M."/>
            <person name="Rooney T."/>
            <person name="Rowley D."/>
            <person name="Sakano H."/>
            <person name="Salzberg S.L."/>
            <person name="Schwartz J.R."/>
            <person name="Shinn P."/>
            <person name="Southwick A.M."/>
            <person name="Sun H."/>
            <person name="Tallon L.J."/>
            <person name="Tambunga G."/>
            <person name="Toriumi M.J."/>
            <person name="Town C.D."/>
            <person name="Utterback T."/>
            <person name="Van Aken S."/>
            <person name="Vaysberg M."/>
            <person name="Vysotskaia V.S."/>
            <person name="Walker M."/>
            <person name="Wu D."/>
            <person name="Yu G."/>
            <person name="Fraser C.M."/>
            <person name="Venter J.C."/>
            <person name="Davis R.W."/>
        </authorList>
    </citation>
    <scope>NUCLEOTIDE SEQUENCE [LARGE SCALE GENOMIC DNA]</scope>
    <source>
        <strain>cv. Columbia</strain>
    </source>
</reference>
<reference key="2">
    <citation type="journal article" date="2017" name="Plant J.">
        <title>Araport11: a complete reannotation of the Arabidopsis thaliana reference genome.</title>
        <authorList>
            <person name="Cheng C.Y."/>
            <person name="Krishnakumar V."/>
            <person name="Chan A.P."/>
            <person name="Thibaud-Nissen F."/>
            <person name="Schobel S."/>
            <person name="Town C.D."/>
        </authorList>
    </citation>
    <scope>GENOME REANNOTATION</scope>
    <source>
        <strain>cv. Columbia</strain>
    </source>
</reference>
<reference key="3">
    <citation type="submission" date="2005-03" db="EMBL/GenBank/DDBJ databases">
        <title>Large-scale analysis of RIKEN Arabidopsis full-length (RAFL) cDNAs.</title>
        <authorList>
            <person name="Totoki Y."/>
            <person name="Seki M."/>
            <person name="Ishida J."/>
            <person name="Nakajima M."/>
            <person name="Enju A."/>
            <person name="Kamiya A."/>
            <person name="Narusaka M."/>
            <person name="Shin-i T."/>
            <person name="Nakagawa M."/>
            <person name="Sakamoto N."/>
            <person name="Oishi K."/>
            <person name="Kohara Y."/>
            <person name="Kobayashi M."/>
            <person name="Toyoda A."/>
            <person name="Sakaki Y."/>
            <person name="Sakurai T."/>
            <person name="Iida K."/>
            <person name="Akiyama K."/>
            <person name="Satou M."/>
            <person name="Toyoda T."/>
            <person name="Konagaya A."/>
            <person name="Carninci P."/>
            <person name="Kawai J."/>
            <person name="Hayashizaki Y."/>
            <person name="Shinozaki K."/>
        </authorList>
    </citation>
    <scope>NUCLEOTIDE SEQUENCE [LARGE SCALE MRNA]</scope>
    <source>
        <strain>cv. Columbia</strain>
    </source>
</reference>
<accession>Q56XW8</accession>
<accession>F4HYE8</accession>
<accession>Q9SX72</accession>
<comment type="sequence caution" evidence="2">
    <conflict type="erroneous gene model prediction">
        <sequence resource="EMBL-CDS" id="AAD49757"/>
    </conflict>
</comment>
<comment type="sequence caution" evidence="2">
    <conflict type="erroneous gene model prediction">
        <sequence resource="EMBL-CDS" id="AEE32285"/>
    </conflict>
</comment>
<dbReference type="EMBL" id="AC007932">
    <property type="protein sequence ID" value="AAD49757.1"/>
    <property type="status" value="ALT_SEQ"/>
    <property type="molecule type" value="Genomic_DNA"/>
</dbReference>
<dbReference type="EMBL" id="CP002684">
    <property type="protein sequence ID" value="AEE32285.1"/>
    <property type="status" value="ALT_SEQ"/>
    <property type="molecule type" value="Genomic_DNA"/>
</dbReference>
<dbReference type="EMBL" id="CP002684">
    <property type="protein sequence ID" value="ANM58527.1"/>
    <property type="molecule type" value="Genomic_DNA"/>
</dbReference>
<dbReference type="EMBL" id="AK221555">
    <property type="protein sequence ID" value="BAD94953.1"/>
    <property type="molecule type" value="mRNA"/>
</dbReference>
<dbReference type="PIR" id="B96524">
    <property type="entry name" value="B96524"/>
</dbReference>
<dbReference type="RefSeq" id="NP_001320954.1">
    <property type="nucleotide sequence ID" value="NM_001333333.1"/>
</dbReference>
<dbReference type="RefSeq" id="NP_175273.1">
    <property type="nucleotide sequence ID" value="NM_103736.2"/>
</dbReference>
<dbReference type="FunCoup" id="Q56XW8">
    <property type="interactions" value="58"/>
</dbReference>
<dbReference type="STRING" id="3702.Q56XW8"/>
<dbReference type="PaxDb" id="3702-AT1G48400.1"/>
<dbReference type="EnsemblPlants" id="AT1G48400.2">
    <property type="protein sequence ID" value="AT1G48400.2"/>
    <property type="gene ID" value="AT1G48400"/>
</dbReference>
<dbReference type="GeneID" id="841260"/>
<dbReference type="Gramene" id="AT1G48400.2">
    <property type="protein sequence ID" value="AT1G48400.2"/>
    <property type="gene ID" value="AT1G48400"/>
</dbReference>
<dbReference type="KEGG" id="ath:AT1G48400"/>
<dbReference type="Araport" id="AT1G48400"/>
<dbReference type="TAIR" id="AT1G48400"/>
<dbReference type="HOGENOM" id="CLU_010721_7_1_1"/>
<dbReference type="InParanoid" id="Q56XW8"/>
<dbReference type="OMA" id="TMSYNDE"/>
<dbReference type="PhylomeDB" id="Q56XW8"/>
<dbReference type="PRO" id="PR:Q56XW8"/>
<dbReference type="Proteomes" id="UP000006548">
    <property type="component" value="Chromosome 1"/>
</dbReference>
<dbReference type="ExpressionAtlas" id="Q56XW8">
    <property type="expression patterns" value="baseline and differential"/>
</dbReference>
<dbReference type="CDD" id="cd22160">
    <property type="entry name" value="F-box_AtFBL13-like"/>
    <property type="match status" value="1"/>
</dbReference>
<dbReference type="Gene3D" id="1.20.1280.50">
    <property type="match status" value="1"/>
</dbReference>
<dbReference type="InterPro" id="IPR036047">
    <property type="entry name" value="F-box-like_dom_sf"/>
</dbReference>
<dbReference type="InterPro" id="IPR053781">
    <property type="entry name" value="F-box_AtFBL13-like"/>
</dbReference>
<dbReference type="InterPro" id="IPR001810">
    <property type="entry name" value="F-box_dom"/>
</dbReference>
<dbReference type="InterPro" id="IPR006566">
    <property type="entry name" value="FBD"/>
</dbReference>
<dbReference type="InterPro" id="IPR055294">
    <property type="entry name" value="FBL60-like"/>
</dbReference>
<dbReference type="InterPro" id="IPR055411">
    <property type="entry name" value="LRR_FXL15/At3g58940/PEG3-like"/>
</dbReference>
<dbReference type="PANTHER" id="PTHR31293">
    <property type="entry name" value="RNI-LIKE SUPERFAMILY PROTEIN"/>
    <property type="match status" value="1"/>
</dbReference>
<dbReference type="PANTHER" id="PTHR31293:SF12">
    <property type="entry name" value="RNI-LIKE SUPERFAMILY PROTEIN"/>
    <property type="match status" value="1"/>
</dbReference>
<dbReference type="Pfam" id="PF00646">
    <property type="entry name" value="F-box"/>
    <property type="match status" value="1"/>
</dbReference>
<dbReference type="Pfam" id="PF24758">
    <property type="entry name" value="LRR_At5g56370"/>
    <property type="match status" value="1"/>
</dbReference>
<dbReference type="SMART" id="SM00579">
    <property type="entry name" value="FBD"/>
    <property type="match status" value="1"/>
</dbReference>
<dbReference type="SMART" id="SM00256">
    <property type="entry name" value="FBOX"/>
    <property type="match status" value="1"/>
</dbReference>
<dbReference type="SUPFAM" id="SSF81383">
    <property type="entry name" value="F-box domain"/>
    <property type="match status" value="1"/>
</dbReference>
<dbReference type="SUPFAM" id="SSF52047">
    <property type="entry name" value="RNI-like"/>
    <property type="match status" value="1"/>
</dbReference>
<dbReference type="PROSITE" id="PS50181">
    <property type="entry name" value="FBOX"/>
    <property type="match status" value="1"/>
</dbReference>
<gene>
    <name type="ordered locus">At1g48400</name>
    <name type="ORF">F11A17.5</name>
</gene>
<sequence length="487" mass="55626">MAMMRTSPRDSISNLPDEILGKILSLLPTKVAASTSVLSKRWRNLLGLVDNLCFDESMVVYPNEEEETSGSLRFCDFVDKTFALLSNSHIKKFSLSRVYKYNDDVDGMVRRWIRTVMERGLLEIHLHATPMSFVAIETKLLTSNTLVKLTLSARCFVEVERVFFPALKSLSLFSILGDYTNYIRLIDGCPVLEELYMRDGDYPFLRLTCGTNVESASLKRLVIFTHNPNEMIWHELIYFEAPSLVYLDYSSYVSAKYDVVDFDLLVEARLSLRLWVSTNDYDYSDDDDDDDDDDDDDDDGDYYIVEPKAPIFGDVTELLAAIRNITTLHLSPDSLEVFHFCCKSMPVFNNLLNLSIESNKDKGWQVMPLLLKSCPNLHTLVIKGLVHRVTSRCGDACACIPKKQRKIVQKEEALCCLRTCQVKVLQISEYGGYFQELKQMRHFLGKLECLETVKVGVHAENNNNSEFLRANVLTLPRVSAKCNVHFI</sequence>
<keyword id="KW-0433">Leucine-rich repeat</keyword>
<keyword id="KW-1185">Reference proteome</keyword>
<keyword id="KW-0677">Repeat</keyword>
<name>FBL30_ARATH</name>
<protein>
    <recommendedName>
        <fullName>F-box/LRR-repeat protein At1g48400</fullName>
    </recommendedName>
</protein>